<proteinExistence type="inferred from homology"/>
<name>RECR_GLOC7</name>
<gene>
    <name evidence="1" type="primary">recR</name>
    <name type="ordered locus">PCC7424_0593</name>
</gene>
<comment type="function">
    <text evidence="1">May play a role in DNA repair. It seems to be involved in an RecBC-independent recombinational process of DNA repair. It may act with RecF and RecO.</text>
</comment>
<comment type="similarity">
    <text evidence="1">Belongs to the RecR family.</text>
</comment>
<evidence type="ECO:0000255" key="1">
    <source>
        <dbReference type="HAMAP-Rule" id="MF_00017"/>
    </source>
</evidence>
<feature type="chain" id="PRO_1000201854" description="Recombination protein RecR">
    <location>
        <begin position="1"/>
        <end position="199"/>
    </location>
</feature>
<feature type="domain" description="Toprim" evidence="1">
    <location>
        <begin position="79"/>
        <end position="173"/>
    </location>
</feature>
<feature type="zinc finger region" description="C4-type" evidence="1">
    <location>
        <begin position="56"/>
        <end position="71"/>
    </location>
</feature>
<protein>
    <recommendedName>
        <fullName evidence="1">Recombination protein RecR</fullName>
    </recommendedName>
</protein>
<accession>B7KEM9</accession>
<sequence length="199" mass="22072">MFTPPLARLIEQLQRLPGVGPKTAQRLALHILKRPEEEVNTLAKAIVEAKKQVGLCQVCFHLSAESTCEICRNPNRDNQTLCVVADSRDVIALEKTREYQGKYHVLGGVISPMDGIGPEQLNISPLVRRVSQHQIKEVILAISPSVEGETTTLYVGQLLKPFTKVTRIAFGLPMGGDLEYADEVTLARALEGRRELDYN</sequence>
<dbReference type="EMBL" id="CP001291">
    <property type="protein sequence ID" value="ACK69054.1"/>
    <property type="molecule type" value="Genomic_DNA"/>
</dbReference>
<dbReference type="RefSeq" id="WP_012598001.1">
    <property type="nucleotide sequence ID" value="NC_011729.1"/>
</dbReference>
<dbReference type="SMR" id="B7KEM9"/>
<dbReference type="STRING" id="65393.PCC7424_0593"/>
<dbReference type="KEGG" id="cyc:PCC7424_0593"/>
<dbReference type="eggNOG" id="COG0353">
    <property type="taxonomic scope" value="Bacteria"/>
</dbReference>
<dbReference type="HOGENOM" id="CLU_060739_1_0_3"/>
<dbReference type="OrthoDB" id="9802672at2"/>
<dbReference type="Proteomes" id="UP000002384">
    <property type="component" value="Chromosome"/>
</dbReference>
<dbReference type="GO" id="GO:0003677">
    <property type="term" value="F:DNA binding"/>
    <property type="evidence" value="ECO:0007669"/>
    <property type="project" value="UniProtKB-UniRule"/>
</dbReference>
<dbReference type="GO" id="GO:0008270">
    <property type="term" value="F:zinc ion binding"/>
    <property type="evidence" value="ECO:0007669"/>
    <property type="project" value="UniProtKB-KW"/>
</dbReference>
<dbReference type="GO" id="GO:0006310">
    <property type="term" value="P:DNA recombination"/>
    <property type="evidence" value="ECO:0007669"/>
    <property type="project" value="UniProtKB-UniRule"/>
</dbReference>
<dbReference type="GO" id="GO:0006281">
    <property type="term" value="P:DNA repair"/>
    <property type="evidence" value="ECO:0007669"/>
    <property type="project" value="UniProtKB-UniRule"/>
</dbReference>
<dbReference type="CDD" id="cd01025">
    <property type="entry name" value="TOPRIM_recR"/>
    <property type="match status" value="1"/>
</dbReference>
<dbReference type="Gene3D" id="3.40.1360.10">
    <property type="match status" value="1"/>
</dbReference>
<dbReference type="Gene3D" id="6.10.250.240">
    <property type="match status" value="1"/>
</dbReference>
<dbReference type="Gene3D" id="1.10.8.420">
    <property type="entry name" value="RecR Domain 1"/>
    <property type="match status" value="1"/>
</dbReference>
<dbReference type="HAMAP" id="MF_00017">
    <property type="entry name" value="RecR"/>
    <property type="match status" value="1"/>
</dbReference>
<dbReference type="InterPro" id="IPR000093">
    <property type="entry name" value="DNA_Rcmb_RecR"/>
</dbReference>
<dbReference type="InterPro" id="IPR003583">
    <property type="entry name" value="Hlx-hairpin-Hlx_DNA-bd_motif"/>
</dbReference>
<dbReference type="InterPro" id="IPR023627">
    <property type="entry name" value="Rcmb_RecR"/>
</dbReference>
<dbReference type="InterPro" id="IPR015967">
    <property type="entry name" value="Rcmb_RecR_Znf"/>
</dbReference>
<dbReference type="InterPro" id="IPR006171">
    <property type="entry name" value="TOPRIM_dom"/>
</dbReference>
<dbReference type="InterPro" id="IPR034137">
    <property type="entry name" value="TOPRIM_RecR"/>
</dbReference>
<dbReference type="NCBIfam" id="TIGR00615">
    <property type="entry name" value="recR"/>
    <property type="match status" value="1"/>
</dbReference>
<dbReference type="PANTHER" id="PTHR30446">
    <property type="entry name" value="RECOMBINATION PROTEIN RECR"/>
    <property type="match status" value="1"/>
</dbReference>
<dbReference type="PANTHER" id="PTHR30446:SF0">
    <property type="entry name" value="RECOMBINATION PROTEIN RECR"/>
    <property type="match status" value="1"/>
</dbReference>
<dbReference type="Pfam" id="PF21175">
    <property type="entry name" value="RecR_C"/>
    <property type="match status" value="1"/>
</dbReference>
<dbReference type="Pfam" id="PF21176">
    <property type="entry name" value="RecR_HhH"/>
    <property type="match status" value="1"/>
</dbReference>
<dbReference type="Pfam" id="PF02132">
    <property type="entry name" value="RecR_ZnF"/>
    <property type="match status" value="1"/>
</dbReference>
<dbReference type="Pfam" id="PF13662">
    <property type="entry name" value="Toprim_4"/>
    <property type="match status" value="1"/>
</dbReference>
<dbReference type="SMART" id="SM00278">
    <property type="entry name" value="HhH1"/>
    <property type="match status" value="1"/>
</dbReference>
<dbReference type="SMART" id="SM00493">
    <property type="entry name" value="TOPRIM"/>
    <property type="match status" value="1"/>
</dbReference>
<dbReference type="SUPFAM" id="SSF111304">
    <property type="entry name" value="Recombination protein RecR"/>
    <property type="match status" value="1"/>
</dbReference>
<dbReference type="PROSITE" id="PS01300">
    <property type="entry name" value="RECR"/>
    <property type="match status" value="1"/>
</dbReference>
<dbReference type="PROSITE" id="PS50880">
    <property type="entry name" value="TOPRIM"/>
    <property type="match status" value="1"/>
</dbReference>
<keyword id="KW-0227">DNA damage</keyword>
<keyword id="KW-0233">DNA recombination</keyword>
<keyword id="KW-0234">DNA repair</keyword>
<keyword id="KW-0479">Metal-binding</keyword>
<keyword id="KW-1185">Reference proteome</keyword>
<keyword id="KW-0862">Zinc</keyword>
<keyword id="KW-0863">Zinc-finger</keyword>
<reference key="1">
    <citation type="journal article" date="2011" name="MBio">
        <title>Novel metabolic attributes of the genus Cyanothece, comprising a group of unicellular nitrogen-fixing Cyanobacteria.</title>
        <authorList>
            <person name="Bandyopadhyay A."/>
            <person name="Elvitigala T."/>
            <person name="Welsh E."/>
            <person name="Stockel J."/>
            <person name="Liberton M."/>
            <person name="Min H."/>
            <person name="Sherman L.A."/>
            <person name="Pakrasi H.B."/>
        </authorList>
    </citation>
    <scope>NUCLEOTIDE SEQUENCE [LARGE SCALE GENOMIC DNA]</scope>
    <source>
        <strain>PCC 7424</strain>
    </source>
</reference>
<organism>
    <name type="scientific">Gloeothece citriformis (strain PCC 7424)</name>
    <name type="common">Cyanothece sp. (strain PCC 7424)</name>
    <dbReference type="NCBI Taxonomy" id="65393"/>
    <lineage>
        <taxon>Bacteria</taxon>
        <taxon>Bacillati</taxon>
        <taxon>Cyanobacteriota</taxon>
        <taxon>Cyanophyceae</taxon>
        <taxon>Oscillatoriophycideae</taxon>
        <taxon>Chroococcales</taxon>
        <taxon>Aphanothecaceae</taxon>
        <taxon>Gloeothece</taxon>
        <taxon>Gloeothece citriformis</taxon>
    </lineage>
</organism>